<feature type="chain" id="PRO_0000146169" description="Small ribosomal subunit protein uS12">
    <location>
        <begin position="1"/>
        <end position="140"/>
    </location>
</feature>
<feature type="modified residue" description="3-methylthioaspartic acid" evidence="1">
    <location>
        <position position="102"/>
    </location>
</feature>
<reference key="1">
    <citation type="journal article" date="2004" name="Nucleic Acids Res.">
        <title>The genome sequence of Bacillus cereus ATCC 10987 reveals metabolic adaptations and a large plasmid related to Bacillus anthracis pXO1.</title>
        <authorList>
            <person name="Rasko D.A."/>
            <person name="Ravel J."/>
            <person name="Oekstad O.A."/>
            <person name="Helgason E."/>
            <person name="Cer R.Z."/>
            <person name="Jiang L."/>
            <person name="Shores K.A."/>
            <person name="Fouts D.E."/>
            <person name="Tourasse N.J."/>
            <person name="Angiuoli S.V."/>
            <person name="Kolonay J.F."/>
            <person name="Nelson W.C."/>
            <person name="Kolstoe A.-B."/>
            <person name="Fraser C.M."/>
            <person name="Read T.D."/>
        </authorList>
    </citation>
    <scope>NUCLEOTIDE SEQUENCE [LARGE SCALE GENOMIC DNA]</scope>
    <source>
        <strain>ATCC 10987 / NRS 248</strain>
    </source>
</reference>
<accession>Q73FA1</accession>
<gene>
    <name evidence="2" type="primary">rpsL</name>
    <name type="ordered locus">BCE_0105</name>
</gene>
<keyword id="KW-0488">Methylation</keyword>
<keyword id="KW-0687">Ribonucleoprotein</keyword>
<keyword id="KW-0689">Ribosomal protein</keyword>
<keyword id="KW-0694">RNA-binding</keyword>
<keyword id="KW-0699">rRNA-binding</keyword>
<keyword id="KW-0820">tRNA-binding</keyword>
<organism>
    <name type="scientific">Bacillus cereus (strain ATCC 10987 / NRS 248)</name>
    <dbReference type="NCBI Taxonomy" id="222523"/>
    <lineage>
        <taxon>Bacteria</taxon>
        <taxon>Bacillati</taxon>
        <taxon>Bacillota</taxon>
        <taxon>Bacilli</taxon>
        <taxon>Bacillales</taxon>
        <taxon>Bacillaceae</taxon>
        <taxon>Bacillus</taxon>
        <taxon>Bacillus cereus group</taxon>
    </lineage>
</organism>
<name>RS12_BACC1</name>
<comment type="function">
    <text evidence="2">With S4 and S5 plays an important role in translational accuracy.</text>
</comment>
<comment type="function">
    <text evidence="2">Interacts with and stabilizes bases of the 16S rRNA that are involved in tRNA selection in the A site and with the mRNA backbone. Located at the interface of the 30S and 50S subunits, it traverses the body of the 30S subunit contacting proteins on the other side and probably holding the rRNA structure together. The combined cluster of proteins S8, S12 and S17 appears to hold together the shoulder and platform of the 30S subunit.</text>
</comment>
<comment type="subunit">
    <text evidence="2">Part of the 30S ribosomal subunit. Contacts proteins S8 and S17. May interact with IF1 in the 30S initiation complex.</text>
</comment>
<comment type="similarity">
    <text evidence="2">Belongs to the universal ribosomal protein uS12 family.</text>
</comment>
<protein>
    <recommendedName>
        <fullName evidence="2">Small ribosomal subunit protein uS12</fullName>
    </recommendedName>
    <alternativeName>
        <fullName evidence="3">30S ribosomal protein S12</fullName>
    </alternativeName>
</protein>
<proteinExistence type="inferred from homology"/>
<evidence type="ECO:0000250" key="1"/>
<evidence type="ECO:0000255" key="2">
    <source>
        <dbReference type="HAMAP-Rule" id="MF_00403"/>
    </source>
</evidence>
<evidence type="ECO:0000305" key="3"/>
<dbReference type="EMBL" id="AE017194">
    <property type="protein sequence ID" value="AAS39041.1"/>
    <property type="molecule type" value="Genomic_DNA"/>
</dbReference>
<dbReference type="SMR" id="Q73FA1"/>
<dbReference type="KEGG" id="bca:BCE_0105"/>
<dbReference type="HOGENOM" id="CLU_104295_1_2_9"/>
<dbReference type="Proteomes" id="UP000002527">
    <property type="component" value="Chromosome"/>
</dbReference>
<dbReference type="GO" id="GO:0015935">
    <property type="term" value="C:small ribosomal subunit"/>
    <property type="evidence" value="ECO:0007669"/>
    <property type="project" value="InterPro"/>
</dbReference>
<dbReference type="GO" id="GO:0019843">
    <property type="term" value="F:rRNA binding"/>
    <property type="evidence" value="ECO:0007669"/>
    <property type="project" value="UniProtKB-UniRule"/>
</dbReference>
<dbReference type="GO" id="GO:0003735">
    <property type="term" value="F:structural constituent of ribosome"/>
    <property type="evidence" value="ECO:0007669"/>
    <property type="project" value="InterPro"/>
</dbReference>
<dbReference type="GO" id="GO:0000049">
    <property type="term" value="F:tRNA binding"/>
    <property type="evidence" value="ECO:0007669"/>
    <property type="project" value="UniProtKB-UniRule"/>
</dbReference>
<dbReference type="GO" id="GO:0006412">
    <property type="term" value="P:translation"/>
    <property type="evidence" value="ECO:0007669"/>
    <property type="project" value="UniProtKB-UniRule"/>
</dbReference>
<dbReference type="CDD" id="cd03368">
    <property type="entry name" value="Ribosomal_S12"/>
    <property type="match status" value="1"/>
</dbReference>
<dbReference type="FunFam" id="2.40.50.140:FF:000001">
    <property type="entry name" value="30S ribosomal protein S12"/>
    <property type="match status" value="1"/>
</dbReference>
<dbReference type="Gene3D" id="2.40.50.140">
    <property type="entry name" value="Nucleic acid-binding proteins"/>
    <property type="match status" value="1"/>
</dbReference>
<dbReference type="HAMAP" id="MF_00403_B">
    <property type="entry name" value="Ribosomal_uS12_B"/>
    <property type="match status" value="1"/>
</dbReference>
<dbReference type="InterPro" id="IPR012340">
    <property type="entry name" value="NA-bd_OB-fold"/>
</dbReference>
<dbReference type="InterPro" id="IPR006032">
    <property type="entry name" value="Ribosomal_uS12"/>
</dbReference>
<dbReference type="InterPro" id="IPR005679">
    <property type="entry name" value="Ribosomal_uS12_bac"/>
</dbReference>
<dbReference type="NCBIfam" id="TIGR00981">
    <property type="entry name" value="rpsL_bact"/>
    <property type="match status" value="1"/>
</dbReference>
<dbReference type="PANTHER" id="PTHR11652">
    <property type="entry name" value="30S RIBOSOMAL PROTEIN S12 FAMILY MEMBER"/>
    <property type="match status" value="1"/>
</dbReference>
<dbReference type="Pfam" id="PF00164">
    <property type="entry name" value="Ribosom_S12_S23"/>
    <property type="match status" value="1"/>
</dbReference>
<dbReference type="PRINTS" id="PR01034">
    <property type="entry name" value="RIBOSOMALS12"/>
</dbReference>
<dbReference type="SUPFAM" id="SSF50249">
    <property type="entry name" value="Nucleic acid-binding proteins"/>
    <property type="match status" value="1"/>
</dbReference>
<dbReference type="PROSITE" id="PS00055">
    <property type="entry name" value="RIBOSOMAL_S12"/>
    <property type="match status" value="1"/>
</dbReference>
<sequence length="140" mass="15446">MPTINQLVRNGRTDKVWKSKSPALNKGFNSLKKKSTDISAPQKRGVCTRVGTMTPKKPNSALRKYARVRLTNGIEVTAYIPGIGHNLQEHSVVLIRGGRVKDLPGVRYHIVRGALDTAGVDKRMQGRSKYGTKKPKAAKK</sequence>